<sequence>MTPRSLPRYGNSSRRKSFPMHRPSNVATATRKKSSIGWVLLACSVAGCKGIDTTEFILGRAGAFELAVRAAQHRHRYLTMVNVGRAPPRRCRTVCMAATDTPRNIRLNG</sequence>
<accession>P64822</accession>
<accession>A0A1R3XY35</accession>
<accession>Q11021</accession>
<accession>X2BHV3</accession>
<feature type="chain" id="PRO_0000103822" description="Uncharacterized protein Mb1386">
    <location>
        <begin position="1"/>
        <end position="109"/>
    </location>
</feature>
<feature type="region of interest" description="Disordered" evidence="1">
    <location>
        <begin position="1"/>
        <end position="26"/>
    </location>
</feature>
<gene>
    <name type="ordered locus">BQ2027_MB1386</name>
</gene>
<protein>
    <recommendedName>
        <fullName>Uncharacterized protein Mb1386</fullName>
    </recommendedName>
</protein>
<keyword id="KW-1185">Reference proteome</keyword>
<evidence type="ECO:0000256" key="1">
    <source>
        <dbReference type="SAM" id="MobiDB-lite"/>
    </source>
</evidence>
<dbReference type="EMBL" id="LT708304">
    <property type="protein sequence ID" value="SIT99989.1"/>
    <property type="molecule type" value="Genomic_DNA"/>
</dbReference>
<dbReference type="RefSeq" id="NP_855040.1">
    <property type="nucleotide sequence ID" value="NC_002945.3"/>
</dbReference>
<dbReference type="KEGG" id="mbo:BQ2027_MB1386"/>
<dbReference type="PATRIC" id="fig|233413.5.peg.1518"/>
<dbReference type="Proteomes" id="UP000001419">
    <property type="component" value="Chromosome"/>
</dbReference>
<organism>
    <name type="scientific">Mycobacterium bovis (strain ATCC BAA-935 / AF2122/97)</name>
    <dbReference type="NCBI Taxonomy" id="233413"/>
    <lineage>
        <taxon>Bacteria</taxon>
        <taxon>Bacillati</taxon>
        <taxon>Actinomycetota</taxon>
        <taxon>Actinomycetes</taxon>
        <taxon>Mycobacteriales</taxon>
        <taxon>Mycobacteriaceae</taxon>
        <taxon>Mycobacterium</taxon>
        <taxon>Mycobacterium tuberculosis complex</taxon>
    </lineage>
</organism>
<reference key="1">
    <citation type="journal article" date="2003" name="Proc. Natl. Acad. Sci. U.S.A.">
        <title>The complete genome sequence of Mycobacterium bovis.</title>
        <authorList>
            <person name="Garnier T."/>
            <person name="Eiglmeier K."/>
            <person name="Camus J.-C."/>
            <person name="Medina N."/>
            <person name="Mansoor H."/>
            <person name="Pryor M."/>
            <person name="Duthoy S."/>
            <person name="Grondin S."/>
            <person name="Lacroix C."/>
            <person name="Monsempe C."/>
            <person name="Simon S."/>
            <person name="Harris B."/>
            <person name="Atkin R."/>
            <person name="Doggett J."/>
            <person name="Mayes R."/>
            <person name="Keating L."/>
            <person name="Wheeler P.R."/>
            <person name="Parkhill J."/>
            <person name="Barrell B.G."/>
            <person name="Cole S.T."/>
            <person name="Gordon S.V."/>
            <person name="Hewinson R.G."/>
        </authorList>
    </citation>
    <scope>NUCLEOTIDE SEQUENCE [LARGE SCALE GENOMIC DNA]</scope>
    <source>
        <strain>ATCC BAA-935 / AF2122/97</strain>
    </source>
</reference>
<reference key="2">
    <citation type="journal article" date="2017" name="Genome Announc.">
        <title>Updated reference genome sequence and annotation of Mycobacterium bovis AF2122/97.</title>
        <authorList>
            <person name="Malone K.M."/>
            <person name="Farrell D."/>
            <person name="Stuber T.P."/>
            <person name="Schubert O.T."/>
            <person name="Aebersold R."/>
            <person name="Robbe-Austerman S."/>
            <person name="Gordon S.V."/>
        </authorList>
    </citation>
    <scope>NUCLEOTIDE SEQUENCE [LARGE SCALE GENOMIC DNA]</scope>
    <scope>GENOME REANNOTATION</scope>
    <source>
        <strain>ATCC BAA-935 / AF2122/97</strain>
    </source>
</reference>
<proteinExistence type="predicted"/>
<name>Y1386_MYCBO</name>